<sequence length="222" mass="24122">MIEAVAVDIDGTLTDASRVLSPVSVSVIRELEVPVILVTGNTHCFTRAAAVLFGVRHFVAENGGVISSDDRIEVVGDRKLCDEAYKHLKEKFNIKKFDSRYRLTDLVLIRGFDVDAASRYLESLNLPVDLVDTGFAIHIKNRGITKGTGLRRISERLGIPTKRIAAIGDSPSDIPMMEISGFPAAVGNAHPSVKSAARYVADRAFGEGFAEIIDHMRAAGMI</sequence>
<comment type="function">
    <text evidence="1">Catalyzes the dephosphorylation of 2-phosphoglycolate.</text>
</comment>
<comment type="catalytic activity">
    <reaction evidence="1">
        <text>2-phosphoglycolate + H2O = glycolate + phosphate</text>
        <dbReference type="Rhea" id="RHEA:14369"/>
        <dbReference type="ChEBI" id="CHEBI:15377"/>
        <dbReference type="ChEBI" id="CHEBI:29805"/>
        <dbReference type="ChEBI" id="CHEBI:43474"/>
        <dbReference type="ChEBI" id="CHEBI:58033"/>
        <dbReference type="EC" id="3.1.3.18"/>
    </reaction>
</comment>
<comment type="cofactor">
    <cofactor evidence="1">
        <name>Mg(2+)</name>
        <dbReference type="ChEBI" id="CHEBI:18420"/>
    </cofactor>
</comment>
<comment type="similarity">
    <text evidence="1">Belongs to the archaeal SPP-like hydrolase family.</text>
</comment>
<keyword id="KW-0119">Carbohydrate metabolism</keyword>
<keyword id="KW-0378">Hydrolase</keyword>
<keyword id="KW-0460">Magnesium</keyword>
<keyword id="KW-0479">Metal-binding</keyword>
<keyword id="KW-1185">Reference proteome</keyword>
<reference key="1">
    <citation type="submission" date="2006-10" db="EMBL/GenBank/DDBJ databases">
        <title>Complete sequence of Methanosaeta thermophila PT.</title>
        <authorList>
            <consortium name="US DOE Joint Genome Institute"/>
            <person name="Copeland A."/>
            <person name="Lucas S."/>
            <person name="Lapidus A."/>
            <person name="Barry K."/>
            <person name="Detter J.C."/>
            <person name="Glavina del Rio T."/>
            <person name="Hammon N."/>
            <person name="Israni S."/>
            <person name="Pitluck S."/>
            <person name="Chain P."/>
            <person name="Malfatti S."/>
            <person name="Shin M."/>
            <person name="Vergez L."/>
            <person name="Schmutz J."/>
            <person name="Larimer F."/>
            <person name="Land M."/>
            <person name="Hauser L."/>
            <person name="Kyrpides N."/>
            <person name="Kim E."/>
            <person name="Smith K.S."/>
            <person name="Ingram-Smith C."/>
            <person name="Richardson P."/>
        </authorList>
    </citation>
    <scope>NUCLEOTIDE SEQUENCE [LARGE SCALE GENOMIC DNA]</scope>
    <source>
        <strain>DSM 6194 / JCM 14653 / NBRC 101360 / PT</strain>
    </source>
</reference>
<organism>
    <name type="scientific">Methanothrix thermoacetophila (strain DSM 6194 / JCM 14653 / NBRC 101360 / PT)</name>
    <name type="common">Methanosaeta thermophila</name>
    <dbReference type="NCBI Taxonomy" id="349307"/>
    <lineage>
        <taxon>Archaea</taxon>
        <taxon>Methanobacteriati</taxon>
        <taxon>Methanobacteriota</taxon>
        <taxon>Stenosarchaea group</taxon>
        <taxon>Methanomicrobia</taxon>
        <taxon>Methanotrichales</taxon>
        <taxon>Methanotrichaceae</taxon>
        <taxon>Methanothrix</taxon>
    </lineage>
</organism>
<accession>A0B7J8</accession>
<gene>
    <name type="ordered locus">Mthe_0884</name>
</gene>
<name>PGP_METTP</name>
<feature type="chain" id="PRO_1000145629" description="Phosphoglycolate phosphatase">
    <location>
        <begin position="1"/>
        <end position="222"/>
    </location>
</feature>
<feature type="active site" description="Nucleophile" evidence="1">
    <location>
        <position position="8"/>
    </location>
</feature>
<feature type="binding site" evidence="1">
    <location>
        <position position="8"/>
    </location>
    <ligand>
        <name>Mg(2+)</name>
        <dbReference type="ChEBI" id="CHEBI:18420"/>
    </ligand>
</feature>
<feature type="binding site" evidence="1">
    <location>
        <position position="10"/>
    </location>
    <ligand>
        <name>Mg(2+)</name>
        <dbReference type="ChEBI" id="CHEBI:18420"/>
    </ligand>
</feature>
<feature type="binding site" evidence="1">
    <location>
        <position position="146"/>
    </location>
    <ligand>
        <name>substrate</name>
    </ligand>
</feature>
<feature type="binding site" evidence="1">
    <location>
        <position position="169"/>
    </location>
    <ligand>
        <name>Mg(2+)</name>
        <dbReference type="ChEBI" id="CHEBI:18420"/>
    </ligand>
</feature>
<feature type="binding site" evidence="1">
    <location>
        <position position="173"/>
    </location>
    <ligand>
        <name>Mg(2+)</name>
        <dbReference type="ChEBI" id="CHEBI:18420"/>
    </ligand>
</feature>
<protein>
    <recommendedName>
        <fullName evidence="1">Phosphoglycolate phosphatase</fullName>
        <shortName evidence="1">PGP</shortName>
        <shortName evidence="1">PGPase</shortName>
        <ecNumber evidence="1">3.1.3.18</ecNumber>
    </recommendedName>
</protein>
<proteinExistence type="inferred from homology"/>
<dbReference type="EC" id="3.1.3.18" evidence="1"/>
<dbReference type="EMBL" id="CP000477">
    <property type="protein sequence ID" value="ABK14672.1"/>
    <property type="molecule type" value="Genomic_DNA"/>
</dbReference>
<dbReference type="RefSeq" id="WP_011696067.1">
    <property type="nucleotide sequence ID" value="NC_008553.1"/>
</dbReference>
<dbReference type="SMR" id="A0B7J8"/>
<dbReference type="STRING" id="349307.Mthe_0884"/>
<dbReference type="GeneID" id="4461841"/>
<dbReference type="KEGG" id="mtp:Mthe_0884"/>
<dbReference type="HOGENOM" id="CLU_044146_2_0_2"/>
<dbReference type="OrthoDB" id="120822at2157"/>
<dbReference type="Proteomes" id="UP000000674">
    <property type="component" value="Chromosome"/>
</dbReference>
<dbReference type="GO" id="GO:0005829">
    <property type="term" value="C:cytosol"/>
    <property type="evidence" value="ECO:0007669"/>
    <property type="project" value="TreeGrafter"/>
</dbReference>
<dbReference type="GO" id="GO:0000287">
    <property type="term" value="F:magnesium ion binding"/>
    <property type="evidence" value="ECO:0007669"/>
    <property type="project" value="InterPro"/>
</dbReference>
<dbReference type="GO" id="GO:0008967">
    <property type="term" value="F:phosphoglycolate phosphatase activity"/>
    <property type="evidence" value="ECO:0007669"/>
    <property type="project" value="UniProtKB-UniRule"/>
</dbReference>
<dbReference type="CDD" id="cd01427">
    <property type="entry name" value="HAD_like"/>
    <property type="match status" value="1"/>
</dbReference>
<dbReference type="CDD" id="cd07514">
    <property type="entry name" value="HAD_Pase"/>
    <property type="match status" value="1"/>
</dbReference>
<dbReference type="Gene3D" id="3.90.1070.10">
    <property type="match status" value="1"/>
</dbReference>
<dbReference type="Gene3D" id="3.40.50.1000">
    <property type="entry name" value="HAD superfamily/HAD-like"/>
    <property type="match status" value="1"/>
</dbReference>
<dbReference type="HAMAP" id="MF_01419">
    <property type="entry name" value="GPH_hydrolase_arch"/>
    <property type="match status" value="1"/>
</dbReference>
<dbReference type="InterPro" id="IPR036412">
    <property type="entry name" value="HAD-like_sf"/>
</dbReference>
<dbReference type="InterPro" id="IPR023214">
    <property type="entry name" value="HAD_sf"/>
</dbReference>
<dbReference type="InterPro" id="IPR006382">
    <property type="entry name" value="PGPase"/>
</dbReference>
<dbReference type="NCBIfam" id="TIGR01487">
    <property type="entry name" value="Pglycolate_arch"/>
    <property type="match status" value="1"/>
</dbReference>
<dbReference type="NCBIfam" id="NF002245">
    <property type="entry name" value="PRK01158.1"/>
    <property type="match status" value="1"/>
</dbReference>
<dbReference type="NCBIfam" id="TIGR01482">
    <property type="entry name" value="SPP-subfamily"/>
    <property type="match status" value="1"/>
</dbReference>
<dbReference type="PANTHER" id="PTHR10000:SF8">
    <property type="entry name" value="HAD SUPERFAMILY HYDROLASE-LIKE, TYPE 3"/>
    <property type="match status" value="1"/>
</dbReference>
<dbReference type="PANTHER" id="PTHR10000">
    <property type="entry name" value="PHOSPHOSERINE PHOSPHATASE"/>
    <property type="match status" value="1"/>
</dbReference>
<dbReference type="Pfam" id="PF08282">
    <property type="entry name" value="Hydrolase_3"/>
    <property type="match status" value="2"/>
</dbReference>
<dbReference type="SFLD" id="SFLDG01140">
    <property type="entry name" value="C2.B:_Phosphomannomutase_and_P"/>
    <property type="match status" value="1"/>
</dbReference>
<dbReference type="SFLD" id="SFLDF00446">
    <property type="entry name" value="phosphoglycolate_phosphatase_3"/>
    <property type="match status" value="1"/>
</dbReference>
<dbReference type="SUPFAM" id="SSF56784">
    <property type="entry name" value="HAD-like"/>
    <property type="match status" value="1"/>
</dbReference>
<evidence type="ECO:0000255" key="1">
    <source>
        <dbReference type="HAMAP-Rule" id="MF_01419"/>
    </source>
</evidence>